<sequence>MPELKTISLFMLTALAEIIGCYLPYLWLREGKTIWLLVPAALSLAVFTWLLTLHPTASGRVYAAYGGVYIFMAVLWLWIVDGIRPTTWDMIGSAVALLGMAIIMFAPRTT</sequence>
<keyword id="KW-0997">Cell inner membrane</keyword>
<keyword id="KW-1003">Cell membrane</keyword>
<keyword id="KW-0472">Membrane</keyword>
<keyword id="KW-0812">Transmembrane</keyword>
<keyword id="KW-1133">Transmembrane helix</keyword>
<protein>
    <recommendedName>
        <fullName evidence="1">UPF0060 membrane protein Mmwyl1_1139</fullName>
    </recommendedName>
</protein>
<name>Y1139_MARMS</name>
<comment type="subcellular location">
    <subcellularLocation>
        <location evidence="1">Cell inner membrane</location>
        <topology evidence="1">Multi-pass membrane protein</topology>
    </subcellularLocation>
</comment>
<comment type="similarity">
    <text evidence="1">Belongs to the UPF0060 family.</text>
</comment>
<feature type="chain" id="PRO_1000073929" description="UPF0060 membrane protein Mmwyl1_1139">
    <location>
        <begin position="1"/>
        <end position="110"/>
    </location>
</feature>
<feature type="transmembrane region" description="Helical" evidence="1">
    <location>
        <begin position="7"/>
        <end position="27"/>
    </location>
</feature>
<feature type="transmembrane region" description="Helical" evidence="1">
    <location>
        <begin position="33"/>
        <end position="53"/>
    </location>
</feature>
<feature type="transmembrane region" description="Helical" evidence="1">
    <location>
        <begin position="63"/>
        <end position="83"/>
    </location>
</feature>
<feature type="transmembrane region" description="Helical" evidence="1">
    <location>
        <begin position="87"/>
        <end position="107"/>
    </location>
</feature>
<organism>
    <name type="scientific">Marinomonas sp. (strain MWYL1)</name>
    <dbReference type="NCBI Taxonomy" id="400668"/>
    <lineage>
        <taxon>Bacteria</taxon>
        <taxon>Pseudomonadati</taxon>
        <taxon>Pseudomonadota</taxon>
        <taxon>Gammaproteobacteria</taxon>
        <taxon>Oceanospirillales</taxon>
        <taxon>Oceanospirillaceae</taxon>
        <taxon>Marinomonas</taxon>
    </lineage>
</organism>
<evidence type="ECO:0000255" key="1">
    <source>
        <dbReference type="HAMAP-Rule" id="MF_00010"/>
    </source>
</evidence>
<proteinExistence type="inferred from homology"/>
<reference key="1">
    <citation type="submission" date="2007-06" db="EMBL/GenBank/DDBJ databases">
        <title>Complete sequence of Marinomonas sp. MWYL1.</title>
        <authorList>
            <consortium name="US DOE Joint Genome Institute"/>
            <person name="Copeland A."/>
            <person name="Lucas S."/>
            <person name="Lapidus A."/>
            <person name="Barry K."/>
            <person name="Glavina del Rio T."/>
            <person name="Dalin E."/>
            <person name="Tice H."/>
            <person name="Pitluck S."/>
            <person name="Kiss H."/>
            <person name="Brettin T."/>
            <person name="Bruce D."/>
            <person name="Detter J.C."/>
            <person name="Han C."/>
            <person name="Schmutz J."/>
            <person name="Larimer F."/>
            <person name="Land M."/>
            <person name="Hauser L."/>
            <person name="Kyrpides N."/>
            <person name="Kim E."/>
            <person name="Johnston A.W.B."/>
            <person name="Todd J.D."/>
            <person name="Rogers R."/>
            <person name="Wexler M."/>
            <person name="Bond P.L."/>
            <person name="Li Y."/>
            <person name="Richardson P."/>
        </authorList>
    </citation>
    <scope>NUCLEOTIDE SEQUENCE [LARGE SCALE GENOMIC DNA]</scope>
    <source>
        <strain>MWYL1</strain>
    </source>
</reference>
<accession>A6VUD9</accession>
<gene>
    <name type="ordered locus">Mmwyl1_1139</name>
</gene>
<dbReference type="EMBL" id="CP000749">
    <property type="protein sequence ID" value="ABR70068.1"/>
    <property type="molecule type" value="Genomic_DNA"/>
</dbReference>
<dbReference type="SMR" id="A6VUD9"/>
<dbReference type="STRING" id="400668.Mmwyl1_1139"/>
<dbReference type="KEGG" id="mmw:Mmwyl1_1139"/>
<dbReference type="eggNOG" id="COG1742">
    <property type="taxonomic scope" value="Bacteria"/>
</dbReference>
<dbReference type="HOGENOM" id="CLU_117653_2_0_6"/>
<dbReference type="OrthoDB" id="123240at2"/>
<dbReference type="GO" id="GO:0005886">
    <property type="term" value="C:plasma membrane"/>
    <property type="evidence" value="ECO:0007669"/>
    <property type="project" value="UniProtKB-SubCell"/>
</dbReference>
<dbReference type="HAMAP" id="MF_00010">
    <property type="entry name" value="UPF0060"/>
    <property type="match status" value="1"/>
</dbReference>
<dbReference type="InterPro" id="IPR003844">
    <property type="entry name" value="UPF0060"/>
</dbReference>
<dbReference type="NCBIfam" id="NF002586">
    <property type="entry name" value="PRK02237.1"/>
    <property type="match status" value="1"/>
</dbReference>
<dbReference type="PANTHER" id="PTHR36116">
    <property type="entry name" value="UPF0060 MEMBRANE PROTEIN YNFA"/>
    <property type="match status" value="1"/>
</dbReference>
<dbReference type="PANTHER" id="PTHR36116:SF1">
    <property type="entry name" value="UPF0060 MEMBRANE PROTEIN YNFA"/>
    <property type="match status" value="1"/>
</dbReference>
<dbReference type="Pfam" id="PF02694">
    <property type="entry name" value="UPF0060"/>
    <property type="match status" value="1"/>
</dbReference>
<dbReference type="SUPFAM" id="SSF103481">
    <property type="entry name" value="Multidrug resistance efflux transporter EmrE"/>
    <property type="match status" value="1"/>
</dbReference>